<evidence type="ECO:0000250" key="1">
    <source>
        <dbReference type="UniProtKB" id="P08850"/>
    </source>
</evidence>
<evidence type="ECO:0000255" key="2">
    <source>
        <dbReference type="PROSITE-ProRule" id="PRU00238"/>
    </source>
</evidence>
<evidence type="ECO:0000269" key="3">
    <source ref="1"/>
</evidence>
<evidence type="ECO:0000305" key="4"/>
<name>HBA1_ALDGI</name>
<protein>
    <recommendedName>
        <fullName>Hemoglobin A subunit alpha-1</fullName>
    </recommendedName>
    <alternativeName>
        <fullName>Hemoglobin A alpha-1 chain</fullName>
    </alternativeName>
</protein>
<dbReference type="SMR" id="P83131"/>
<dbReference type="GO" id="GO:0072562">
    <property type="term" value="C:blood microparticle"/>
    <property type="evidence" value="ECO:0007669"/>
    <property type="project" value="TreeGrafter"/>
</dbReference>
<dbReference type="GO" id="GO:0031838">
    <property type="term" value="C:haptoglobin-hemoglobin complex"/>
    <property type="evidence" value="ECO:0007669"/>
    <property type="project" value="TreeGrafter"/>
</dbReference>
<dbReference type="GO" id="GO:0005833">
    <property type="term" value="C:hemoglobin complex"/>
    <property type="evidence" value="ECO:0007669"/>
    <property type="project" value="InterPro"/>
</dbReference>
<dbReference type="GO" id="GO:0031720">
    <property type="term" value="F:haptoglobin binding"/>
    <property type="evidence" value="ECO:0007669"/>
    <property type="project" value="TreeGrafter"/>
</dbReference>
<dbReference type="GO" id="GO:0020037">
    <property type="term" value="F:heme binding"/>
    <property type="evidence" value="ECO:0007669"/>
    <property type="project" value="InterPro"/>
</dbReference>
<dbReference type="GO" id="GO:0005506">
    <property type="term" value="F:iron ion binding"/>
    <property type="evidence" value="ECO:0007669"/>
    <property type="project" value="InterPro"/>
</dbReference>
<dbReference type="GO" id="GO:0043177">
    <property type="term" value="F:organic acid binding"/>
    <property type="evidence" value="ECO:0007669"/>
    <property type="project" value="TreeGrafter"/>
</dbReference>
<dbReference type="GO" id="GO:0019825">
    <property type="term" value="F:oxygen binding"/>
    <property type="evidence" value="ECO:0007669"/>
    <property type="project" value="InterPro"/>
</dbReference>
<dbReference type="GO" id="GO:0005344">
    <property type="term" value="F:oxygen carrier activity"/>
    <property type="evidence" value="ECO:0007669"/>
    <property type="project" value="UniProtKB-KW"/>
</dbReference>
<dbReference type="GO" id="GO:0004601">
    <property type="term" value="F:peroxidase activity"/>
    <property type="evidence" value="ECO:0007669"/>
    <property type="project" value="TreeGrafter"/>
</dbReference>
<dbReference type="GO" id="GO:0042744">
    <property type="term" value="P:hydrogen peroxide catabolic process"/>
    <property type="evidence" value="ECO:0007669"/>
    <property type="project" value="TreeGrafter"/>
</dbReference>
<dbReference type="CDD" id="cd08927">
    <property type="entry name" value="Hb-alpha-like"/>
    <property type="match status" value="1"/>
</dbReference>
<dbReference type="FunFam" id="1.10.490.10:FF:000002">
    <property type="entry name" value="Hemoglobin subunit alpha"/>
    <property type="match status" value="1"/>
</dbReference>
<dbReference type="Gene3D" id="1.10.490.10">
    <property type="entry name" value="Globins"/>
    <property type="match status" value="1"/>
</dbReference>
<dbReference type="InterPro" id="IPR000971">
    <property type="entry name" value="Globin"/>
</dbReference>
<dbReference type="InterPro" id="IPR009050">
    <property type="entry name" value="Globin-like_sf"/>
</dbReference>
<dbReference type="InterPro" id="IPR012292">
    <property type="entry name" value="Globin/Proto"/>
</dbReference>
<dbReference type="InterPro" id="IPR002338">
    <property type="entry name" value="Hemoglobin_a-typ"/>
</dbReference>
<dbReference type="InterPro" id="IPR050056">
    <property type="entry name" value="Hemoglobin_oxygen_transport"/>
</dbReference>
<dbReference type="InterPro" id="IPR002339">
    <property type="entry name" value="Hemoglobin_pi"/>
</dbReference>
<dbReference type="PANTHER" id="PTHR11442">
    <property type="entry name" value="HEMOGLOBIN FAMILY MEMBER"/>
    <property type="match status" value="1"/>
</dbReference>
<dbReference type="PANTHER" id="PTHR11442:SF48">
    <property type="entry name" value="HEMOGLOBIN SUBUNIT ALPHA"/>
    <property type="match status" value="1"/>
</dbReference>
<dbReference type="Pfam" id="PF00042">
    <property type="entry name" value="Globin"/>
    <property type="match status" value="1"/>
</dbReference>
<dbReference type="PRINTS" id="PR00612">
    <property type="entry name" value="ALPHAHAEM"/>
</dbReference>
<dbReference type="PRINTS" id="PR00815">
    <property type="entry name" value="PIHAEM"/>
</dbReference>
<dbReference type="SUPFAM" id="SSF46458">
    <property type="entry name" value="Globin-like"/>
    <property type="match status" value="1"/>
</dbReference>
<dbReference type="PROSITE" id="PS01033">
    <property type="entry name" value="GLOBIN"/>
    <property type="match status" value="1"/>
</dbReference>
<comment type="function">
    <text evidence="1">Involved in oxygen transport from the lung to the various peripheral tissues.</text>
</comment>
<comment type="subunit">
    <text evidence="4">Tetramer of alpha-1, alpha-2 and two identical beta chains.</text>
</comment>
<comment type="tissue specificity">
    <text evidence="4">Red blood cells.</text>
</comment>
<comment type="miscellaneous">
    <text evidence="4">Hemoglobin A is the major, and hemoglobin D the minor hemoglobin of this species.</text>
</comment>
<comment type="similarity">
    <text evidence="2">Belongs to the globin family.</text>
</comment>
<reference evidence="4" key="1">
    <citation type="journal article" date="2001" name="Zool. Sci.">
        <title>The amino acid sequences of the alpha- and beta-globin chains of hemoglobin from the Aldabra giant tortoises, Geochelone gigantea.</title>
        <authorList>
            <person name="Shishikura F."/>
            <person name="Takami K."/>
        </authorList>
    </citation>
    <scope>PROTEIN SEQUENCE OF 2-142</scope>
    <source>
        <tissue>Erythrocyte</tissue>
    </source>
</reference>
<proteinExistence type="evidence at protein level"/>
<organism evidence="4">
    <name type="scientific">Aldabrachelys gigantea</name>
    <name type="common">Aldabra giant tortoise</name>
    <name type="synonym">Geochelone gigantea</name>
    <dbReference type="NCBI Taxonomy" id="167804"/>
    <lineage>
        <taxon>Eukaryota</taxon>
        <taxon>Metazoa</taxon>
        <taxon>Chordata</taxon>
        <taxon>Craniata</taxon>
        <taxon>Vertebrata</taxon>
        <taxon>Euteleostomi</taxon>
        <taxon>Archelosauria</taxon>
        <taxon>Testudinata</taxon>
        <taxon>Testudines</taxon>
        <taxon>Cryptodira</taxon>
        <taxon>Durocryptodira</taxon>
        <taxon>Testudinoidea</taxon>
        <taxon>Testudinidae</taxon>
        <taxon>Aldabrachelys</taxon>
    </lineage>
</organism>
<feature type="initiator methionine" description="Removed" evidence="3">
    <location>
        <position position="1"/>
    </location>
</feature>
<feature type="chain" id="PRO_0000052539" description="Hemoglobin A subunit alpha-1">
    <location>
        <begin position="2"/>
        <end position="142"/>
    </location>
</feature>
<feature type="domain" description="Globin" evidence="2">
    <location>
        <begin position="2"/>
        <end position="142"/>
    </location>
</feature>
<feature type="binding site" evidence="2">
    <location>
        <position position="59"/>
    </location>
    <ligand>
        <name>O2</name>
        <dbReference type="ChEBI" id="CHEBI:15379"/>
    </ligand>
</feature>
<feature type="binding site" description="proximal binding residue" evidence="2">
    <location>
        <position position="88"/>
    </location>
    <ligand>
        <name>heme b</name>
        <dbReference type="ChEBI" id="CHEBI:60344"/>
    </ligand>
    <ligandPart>
        <name>Fe</name>
        <dbReference type="ChEBI" id="CHEBI:18248"/>
    </ligandPart>
</feature>
<accession>P83131</accession>
<keyword id="KW-0903">Direct protein sequencing</keyword>
<keyword id="KW-0349">Heme</keyword>
<keyword id="KW-0408">Iron</keyword>
<keyword id="KW-0479">Metal-binding</keyword>
<keyword id="KW-0561">Oxygen transport</keyword>
<keyword id="KW-0813">Transport</keyword>
<sequence length="142" mass="15682">MVLTAGDKANVKTVWSKVGSHLEEYGSETLERLFVVYPSTKTYFPHFDLHHDSPQVRAHGKKVLSALGEAVNHIDDIPGALSKLSDLHAQNLRVDPVNFKLLNLCFVVVSGTHHPTILTPEVHVSLDKFLSAVATALTSKYR</sequence>